<proteinExistence type="inferred from homology"/>
<keyword id="KW-0963">Cytoplasm</keyword>
<keyword id="KW-0238">DNA-binding</keyword>
<keyword id="KW-0255">Endonuclease</keyword>
<keyword id="KW-0378">Hydrolase</keyword>
<keyword id="KW-0540">Nuclease</keyword>
<keyword id="KW-1185">Reference proteome</keyword>
<name>NUCS_SULAC</name>
<evidence type="ECO:0000255" key="1">
    <source>
        <dbReference type="HAMAP-Rule" id="MF_00722"/>
    </source>
</evidence>
<gene>
    <name evidence="1" type="primary">nucS</name>
    <name type="ordered locus">Saci_0200</name>
</gene>
<feature type="chain" id="PRO_0000155699" description="Endonuclease NucS">
    <location>
        <begin position="1"/>
        <end position="250"/>
    </location>
</feature>
<dbReference type="EC" id="3.1.-.-" evidence="1"/>
<dbReference type="EMBL" id="CP000077">
    <property type="protein sequence ID" value="AAY79619.1"/>
    <property type="molecule type" value="Genomic_DNA"/>
</dbReference>
<dbReference type="RefSeq" id="WP_011277120.1">
    <property type="nucleotide sequence ID" value="NC_007181.1"/>
</dbReference>
<dbReference type="SMR" id="Q4JC60"/>
<dbReference type="STRING" id="330779.Saci_0200"/>
<dbReference type="GeneID" id="14550728"/>
<dbReference type="GeneID" id="78440552"/>
<dbReference type="KEGG" id="sai:Saci_0200"/>
<dbReference type="PATRIC" id="fig|330779.12.peg.192"/>
<dbReference type="eggNOG" id="arCOG01304">
    <property type="taxonomic scope" value="Archaea"/>
</dbReference>
<dbReference type="HOGENOM" id="CLU_069350_1_0_2"/>
<dbReference type="Proteomes" id="UP000001018">
    <property type="component" value="Chromosome"/>
</dbReference>
<dbReference type="GO" id="GO:0005737">
    <property type="term" value="C:cytoplasm"/>
    <property type="evidence" value="ECO:0007669"/>
    <property type="project" value="UniProtKB-SubCell"/>
</dbReference>
<dbReference type="GO" id="GO:0003677">
    <property type="term" value="F:DNA binding"/>
    <property type="evidence" value="ECO:0007669"/>
    <property type="project" value="UniProtKB-KW"/>
</dbReference>
<dbReference type="GO" id="GO:0000014">
    <property type="term" value="F:single-stranded DNA endodeoxyribonuclease activity"/>
    <property type="evidence" value="ECO:0007669"/>
    <property type="project" value="UniProtKB-UniRule"/>
</dbReference>
<dbReference type="CDD" id="cd22341">
    <property type="entry name" value="NucS-like"/>
    <property type="match status" value="1"/>
</dbReference>
<dbReference type="Gene3D" id="2.70.180.20">
    <property type="match status" value="1"/>
</dbReference>
<dbReference type="Gene3D" id="3.40.1350.10">
    <property type="match status" value="1"/>
</dbReference>
<dbReference type="HAMAP" id="MF_00722">
    <property type="entry name" value="NucS"/>
    <property type="match status" value="1"/>
</dbReference>
<dbReference type="InterPro" id="IPR002793">
    <property type="entry name" value="Endonuclease_NucS"/>
</dbReference>
<dbReference type="InterPro" id="IPR048301">
    <property type="entry name" value="NucS_C"/>
</dbReference>
<dbReference type="InterPro" id="IPR048302">
    <property type="entry name" value="NucS_N"/>
</dbReference>
<dbReference type="InterPro" id="IPR049173">
    <property type="entry name" value="NucS_N_sf"/>
</dbReference>
<dbReference type="InterPro" id="IPR011856">
    <property type="entry name" value="tRNA_endonuc-like_dom_sf"/>
</dbReference>
<dbReference type="NCBIfam" id="NF003270">
    <property type="entry name" value="PRK04247.1"/>
    <property type="match status" value="1"/>
</dbReference>
<dbReference type="PANTHER" id="PTHR38814">
    <property type="entry name" value="ENDONUCLEASE NUCS"/>
    <property type="match status" value="1"/>
</dbReference>
<dbReference type="PANTHER" id="PTHR38814:SF1">
    <property type="entry name" value="ENDONUCLEASE NUCS"/>
    <property type="match status" value="1"/>
</dbReference>
<dbReference type="Pfam" id="PF01939">
    <property type="entry name" value="NucS_C"/>
    <property type="match status" value="1"/>
</dbReference>
<dbReference type="Pfam" id="PF21003">
    <property type="entry name" value="NucS_N"/>
    <property type="match status" value="1"/>
</dbReference>
<sequence length="250" mass="28418">MFKVLLEPDLQEALIFLNESVNALLTIYSECEILYSGRAKSRASLSPRLTIIKPDGSVIIHGPTKREPVNWQPPGSRIEYSIESGVLTVNAERKRPKERLSILHHRVYYITSSEVKPGEFFLVGREKDEVDFIINNPDVIEGGFKPIHREYRTPYGTVDLIGKDKEGNLVVLEFKRAKASLQAVSQLYRYIMYFKEIGENARGILVAPGISENALNLLKRLELEYVNISDKLGDSTISRPINYVPNLQRD</sequence>
<comment type="function">
    <text evidence="1">Cleaves both 3' and 5' ssDNA extremities of branched DNA structures.</text>
</comment>
<comment type="subcellular location">
    <subcellularLocation>
        <location evidence="1">Cytoplasm</location>
    </subcellularLocation>
</comment>
<comment type="similarity">
    <text evidence="1">Belongs to the NucS endonuclease family.</text>
</comment>
<organism>
    <name type="scientific">Sulfolobus acidocaldarius (strain ATCC 33909 / DSM 639 / JCM 8929 / NBRC 15157 / NCIMB 11770)</name>
    <dbReference type="NCBI Taxonomy" id="330779"/>
    <lineage>
        <taxon>Archaea</taxon>
        <taxon>Thermoproteota</taxon>
        <taxon>Thermoprotei</taxon>
        <taxon>Sulfolobales</taxon>
        <taxon>Sulfolobaceae</taxon>
        <taxon>Sulfolobus</taxon>
    </lineage>
</organism>
<reference key="1">
    <citation type="journal article" date="2005" name="J. Bacteriol.">
        <title>The genome of Sulfolobus acidocaldarius, a model organism of the Crenarchaeota.</title>
        <authorList>
            <person name="Chen L."/>
            <person name="Bruegger K."/>
            <person name="Skovgaard M."/>
            <person name="Redder P."/>
            <person name="She Q."/>
            <person name="Torarinsson E."/>
            <person name="Greve B."/>
            <person name="Awayez M."/>
            <person name="Zibat A."/>
            <person name="Klenk H.-P."/>
            <person name="Garrett R.A."/>
        </authorList>
    </citation>
    <scope>NUCLEOTIDE SEQUENCE [LARGE SCALE GENOMIC DNA]</scope>
    <source>
        <strain>ATCC 33909 / DSM 639 / JCM 8929 / NBRC 15157 / NCIMB 11770</strain>
    </source>
</reference>
<protein>
    <recommendedName>
        <fullName evidence="1">Endonuclease NucS</fullName>
        <ecNumber evidence="1">3.1.-.-</ecNumber>
    </recommendedName>
</protein>
<accession>Q4JC60</accession>